<accession>A7HCH7</accession>
<feature type="chain" id="PRO_1000051960" description="DNA-directed RNA polymerase subunit beta">
    <location>
        <begin position="1"/>
        <end position="1416"/>
    </location>
</feature>
<feature type="region of interest" description="Disordered" evidence="2">
    <location>
        <begin position="1388"/>
        <end position="1416"/>
    </location>
</feature>
<gene>
    <name evidence="1" type="primary">rpoB</name>
    <name type="ordered locus">Anae109_2221</name>
</gene>
<sequence length="1416" mass="158370">MATTIQNNFRIRRNFGKINKIAEIPNLIAIQKSSYDKFLQADVPPEKREDTGLQGVFKSVFPIKDFNETSSLEFVSYHLEKPKYDVDECHQRGMTYSAPIKVVVRLVVWDKDEETGAQSIRDVKEQEVYFGEIPLMTENGTFIINGTERVVVSQLHRSPGAFFDHDKGKSHSSGKLLFNARIIPYRGSWIDFEFDHKDILYVRIDRRRKLPATVLLRALGGVPDTAKKTPIEFHGSAEEILKYYYDTETIRIEGKGKFEKDLNPDLLKGQRATRDIRDPKTNEIVVKKNRKFTESAIKKLVAAKMKSLPIEPEEVYTKISAEDVVDEQTGEVLLEVNEEVSEEKLEELRKRGIGEFKVLFIDNLNVLPSLRDTLMQDKISTPEEAIMEIYRRLRPGDPPTPETATNLFVNLFFNAERYDLSKVGRLKLNYKFGIEEPLDNTVVTKRDILEVVRFLIDLKNGTPNKDVDDIDHLGNRRVRAVGELLENQYRIGLVRMERAIKERMSLQEIETLMPHDLINAKPVTAVIKEFFGSSQLSQFMDQTNPLSEVTHKRRLSALGPGGLTRERAGFEVRDVHSTHYGRICPIETPEGPNIGLIASLSTYARVNEYGFVETPYRKVEKGRVTDEVSFYSALEEEKHIIAQANAPVDKKGVFTGNIVSCRKEGEYINARPDEVDLMDVSPNQLVSVAASLVPFLENDDANRALMGSNMQRQAVPLLRTRAPLVGTGIEGIVARDSGVCVVAKRDGVIQSVDAARIVVKADVPTSATDVANEVDIYNLIKYQRSNQNTCINQKPIVKPGERVKKGDVIADGPATEMGELALGQNVVVAFMPWQGYNFEDSILLSERFLKDDVFTSVHIEEFECVARDTKLGKEEITRDIPNVGEEALKDLDESGIIRIGAEVKPGDILVGKITPKGETQLSPEEKLLRAIFGEKAGDVRDSSLRVPPGVSGTVINAKVFSRKGVEKDERAKAIEEMEEAKLLKDQNDEIRIIQDSAFQKIRRLLLGKEVSGRLVDDKGNQLLKRGDVLDDALLDTVPQRYWGEIAVEGDVQDLVRKIVENFEEQKELVKLLFGEKIGRLKKGDELPPGVIKMVKVYVAIKRKLAVGDKMAGRHGNKGVVSRVLPEEDLPYLEDGRPVDIVLNPLGVPSRMNVGQILETHLGWAAKNVGWRLQEMIEKNFGPDQLRKKLKKAFEGVEGSDRLGQLIDELPAQELPKLATKLKEGMHVATPVFDGAHEDEMKALLGEGSATMQSILFDGRTGEPFDQDVTVGVMYMLKLHHLVDEKIHARSIGPYSLVTQQPLGGKAQFGGQRLGEMEVWAMEAYGAAYSLQEFLTVKSDDVVGRTRMYEAIVKGENTLESGLPESFNVLIKELQSLALDVELLETPEAKAAREQAEGELGGPLGTPRGAAAEKNTA</sequence>
<name>RPOB_ANADF</name>
<protein>
    <recommendedName>
        <fullName evidence="1">DNA-directed RNA polymerase subunit beta</fullName>
        <shortName evidence="1">RNAP subunit beta</shortName>
        <ecNumber evidence="1">2.7.7.6</ecNumber>
    </recommendedName>
    <alternativeName>
        <fullName evidence="1">RNA polymerase subunit beta</fullName>
    </alternativeName>
    <alternativeName>
        <fullName evidence="1">Transcriptase subunit beta</fullName>
    </alternativeName>
</protein>
<organism>
    <name type="scientific">Anaeromyxobacter sp. (strain Fw109-5)</name>
    <dbReference type="NCBI Taxonomy" id="404589"/>
    <lineage>
        <taxon>Bacteria</taxon>
        <taxon>Pseudomonadati</taxon>
        <taxon>Myxococcota</taxon>
        <taxon>Myxococcia</taxon>
        <taxon>Myxococcales</taxon>
        <taxon>Cystobacterineae</taxon>
        <taxon>Anaeromyxobacteraceae</taxon>
        <taxon>Anaeromyxobacter</taxon>
    </lineage>
</organism>
<keyword id="KW-0240">DNA-directed RNA polymerase</keyword>
<keyword id="KW-0548">Nucleotidyltransferase</keyword>
<keyword id="KW-1185">Reference proteome</keyword>
<keyword id="KW-0804">Transcription</keyword>
<keyword id="KW-0808">Transferase</keyword>
<dbReference type="EC" id="2.7.7.6" evidence="1"/>
<dbReference type="EMBL" id="CP000769">
    <property type="protein sequence ID" value="ABS26423.1"/>
    <property type="molecule type" value="Genomic_DNA"/>
</dbReference>
<dbReference type="RefSeq" id="WP_012097005.1">
    <property type="nucleotide sequence ID" value="NC_009675.1"/>
</dbReference>
<dbReference type="SMR" id="A7HCH7"/>
<dbReference type="STRING" id="404589.Anae109_2221"/>
<dbReference type="KEGG" id="afw:Anae109_2221"/>
<dbReference type="eggNOG" id="COG0085">
    <property type="taxonomic scope" value="Bacteria"/>
</dbReference>
<dbReference type="HOGENOM" id="CLU_000524_4_3_7"/>
<dbReference type="OrthoDB" id="9803954at2"/>
<dbReference type="Proteomes" id="UP000006382">
    <property type="component" value="Chromosome"/>
</dbReference>
<dbReference type="GO" id="GO:0000428">
    <property type="term" value="C:DNA-directed RNA polymerase complex"/>
    <property type="evidence" value="ECO:0007669"/>
    <property type="project" value="UniProtKB-KW"/>
</dbReference>
<dbReference type="GO" id="GO:0003677">
    <property type="term" value="F:DNA binding"/>
    <property type="evidence" value="ECO:0007669"/>
    <property type="project" value="UniProtKB-UniRule"/>
</dbReference>
<dbReference type="GO" id="GO:0003899">
    <property type="term" value="F:DNA-directed RNA polymerase activity"/>
    <property type="evidence" value="ECO:0007669"/>
    <property type="project" value="UniProtKB-UniRule"/>
</dbReference>
<dbReference type="GO" id="GO:0032549">
    <property type="term" value="F:ribonucleoside binding"/>
    <property type="evidence" value="ECO:0007669"/>
    <property type="project" value="InterPro"/>
</dbReference>
<dbReference type="GO" id="GO:0006351">
    <property type="term" value="P:DNA-templated transcription"/>
    <property type="evidence" value="ECO:0007669"/>
    <property type="project" value="UniProtKB-UniRule"/>
</dbReference>
<dbReference type="CDD" id="cd00653">
    <property type="entry name" value="RNA_pol_B_RPB2"/>
    <property type="match status" value="1"/>
</dbReference>
<dbReference type="FunFam" id="2.40.50.100:FF:000006">
    <property type="entry name" value="DNA-directed RNA polymerase subunit beta"/>
    <property type="match status" value="1"/>
</dbReference>
<dbReference type="FunFam" id="3.90.1800.10:FF:000001">
    <property type="entry name" value="DNA-directed RNA polymerase subunit beta"/>
    <property type="match status" value="1"/>
</dbReference>
<dbReference type="Gene3D" id="2.40.50.100">
    <property type="match status" value="1"/>
</dbReference>
<dbReference type="Gene3D" id="2.40.50.150">
    <property type="match status" value="1"/>
</dbReference>
<dbReference type="Gene3D" id="3.90.1100.10">
    <property type="match status" value="1"/>
</dbReference>
<dbReference type="Gene3D" id="2.30.150.10">
    <property type="entry name" value="DNA-directed RNA polymerase, beta subunit, external 1 domain"/>
    <property type="match status" value="1"/>
</dbReference>
<dbReference type="Gene3D" id="2.40.270.10">
    <property type="entry name" value="DNA-directed RNA polymerase, subunit 2, domain 6"/>
    <property type="match status" value="1"/>
</dbReference>
<dbReference type="Gene3D" id="3.90.1800.10">
    <property type="entry name" value="RNA polymerase alpha subunit dimerisation domain"/>
    <property type="match status" value="1"/>
</dbReference>
<dbReference type="Gene3D" id="3.90.1110.10">
    <property type="entry name" value="RNA polymerase Rpb2, domain 2"/>
    <property type="match status" value="1"/>
</dbReference>
<dbReference type="HAMAP" id="MF_01321">
    <property type="entry name" value="RNApol_bact_RpoB"/>
    <property type="match status" value="1"/>
</dbReference>
<dbReference type="InterPro" id="IPR042107">
    <property type="entry name" value="DNA-dir_RNA_pol_bsu_ext_1_sf"/>
</dbReference>
<dbReference type="InterPro" id="IPR019462">
    <property type="entry name" value="DNA-dir_RNA_pol_bsu_external_1"/>
</dbReference>
<dbReference type="InterPro" id="IPR015712">
    <property type="entry name" value="DNA-dir_RNA_pol_su2"/>
</dbReference>
<dbReference type="InterPro" id="IPR007120">
    <property type="entry name" value="DNA-dir_RNAP_su2_dom"/>
</dbReference>
<dbReference type="InterPro" id="IPR037033">
    <property type="entry name" value="DNA-dir_RNAP_su2_hyb_sf"/>
</dbReference>
<dbReference type="InterPro" id="IPR010243">
    <property type="entry name" value="RNA_pol_bsu_bac"/>
</dbReference>
<dbReference type="InterPro" id="IPR007121">
    <property type="entry name" value="RNA_pol_bsu_CS"/>
</dbReference>
<dbReference type="InterPro" id="IPR007644">
    <property type="entry name" value="RNA_pol_bsu_protrusion"/>
</dbReference>
<dbReference type="InterPro" id="IPR007642">
    <property type="entry name" value="RNA_pol_Rpb2_2"/>
</dbReference>
<dbReference type="InterPro" id="IPR037034">
    <property type="entry name" value="RNA_pol_Rpb2_2_sf"/>
</dbReference>
<dbReference type="InterPro" id="IPR007645">
    <property type="entry name" value="RNA_pol_Rpb2_3"/>
</dbReference>
<dbReference type="InterPro" id="IPR007641">
    <property type="entry name" value="RNA_pol_Rpb2_7"/>
</dbReference>
<dbReference type="InterPro" id="IPR014724">
    <property type="entry name" value="RNA_pol_RPB2_OB-fold"/>
</dbReference>
<dbReference type="NCBIfam" id="NF001616">
    <property type="entry name" value="PRK00405.1"/>
    <property type="match status" value="1"/>
</dbReference>
<dbReference type="NCBIfam" id="TIGR02013">
    <property type="entry name" value="rpoB"/>
    <property type="match status" value="1"/>
</dbReference>
<dbReference type="PANTHER" id="PTHR20856">
    <property type="entry name" value="DNA-DIRECTED RNA POLYMERASE I SUBUNIT 2"/>
    <property type="match status" value="1"/>
</dbReference>
<dbReference type="Pfam" id="PF04563">
    <property type="entry name" value="RNA_pol_Rpb2_1"/>
    <property type="match status" value="1"/>
</dbReference>
<dbReference type="Pfam" id="PF04561">
    <property type="entry name" value="RNA_pol_Rpb2_2"/>
    <property type="match status" value="2"/>
</dbReference>
<dbReference type="Pfam" id="PF04565">
    <property type="entry name" value="RNA_pol_Rpb2_3"/>
    <property type="match status" value="1"/>
</dbReference>
<dbReference type="Pfam" id="PF10385">
    <property type="entry name" value="RNA_pol_Rpb2_45"/>
    <property type="match status" value="1"/>
</dbReference>
<dbReference type="Pfam" id="PF00562">
    <property type="entry name" value="RNA_pol_Rpb2_6"/>
    <property type="match status" value="1"/>
</dbReference>
<dbReference type="Pfam" id="PF04560">
    <property type="entry name" value="RNA_pol_Rpb2_7"/>
    <property type="match status" value="1"/>
</dbReference>
<dbReference type="SUPFAM" id="SSF64484">
    <property type="entry name" value="beta and beta-prime subunits of DNA dependent RNA-polymerase"/>
    <property type="match status" value="1"/>
</dbReference>
<dbReference type="PROSITE" id="PS01166">
    <property type="entry name" value="RNA_POL_BETA"/>
    <property type="match status" value="1"/>
</dbReference>
<comment type="function">
    <text evidence="1">DNA-dependent RNA polymerase catalyzes the transcription of DNA into RNA using the four ribonucleoside triphosphates as substrates.</text>
</comment>
<comment type="catalytic activity">
    <reaction evidence="1">
        <text>RNA(n) + a ribonucleoside 5'-triphosphate = RNA(n+1) + diphosphate</text>
        <dbReference type="Rhea" id="RHEA:21248"/>
        <dbReference type="Rhea" id="RHEA-COMP:14527"/>
        <dbReference type="Rhea" id="RHEA-COMP:17342"/>
        <dbReference type="ChEBI" id="CHEBI:33019"/>
        <dbReference type="ChEBI" id="CHEBI:61557"/>
        <dbReference type="ChEBI" id="CHEBI:140395"/>
        <dbReference type="EC" id="2.7.7.6"/>
    </reaction>
</comment>
<comment type="subunit">
    <text evidence="1">The RNAP catalytic core consists of 2 alpha, 1 beta, 1 beta' and 1 omega subunit. When a sigma factor is associated with the core the holoenzyme is formed, which can initiate transcription.</text>
</comment>
<comment type="similarity">
    <text evidence="1">Belongs to the RNA polymerase beta chain family.</text>
</comment>
<evidence type="ECO:0000255" key="1">
    <source>
        <dbReference type="HAMAP-Rule" id="MF_01321"/>
    </source>
</evidence>
<evidence type="ECO:0000256" key="2">
    <source>
        <dbReference type="SAM" id="MobiDB-lite"/>
    </source>
</evidence>
<reference key="1">
    <citation type="journal article" date="2015" name="Genome Announc.">
        <title>Complete genome sequence of Anaeromyxobacter sp. Fw109-5, an anaerobic, metal-reducing bacterium isolated from a contaminated subsurface environment.</title>
        <authorList>
            <person name="Hwang C."/>
            <person name="Copeland A."/>
            <person name="Lucas S."/>
            <person name="Lapidus A."/>
            <person name="Barry K."/>
            <person name="Glavina Del Rio T."/>
            <person name="Dalin E."/>
            <person name="Tice H."/>
            <person name="Pitluck S."/>
            <person name="Sims D."/>
            <person name="Brettin T."/>
            <person name="Bruce D.C."/>
            <person name="Detter J.C."/>
            <person name="Han C.S."/>
            <person name="Schmutz J."/>
            <person name="Larimer F.W."/>
            <person name="Land M.L."/>
            <person name="Hauser L.J."/>
            <person name="Kyrpides N."/>
            <person name="Lykidis A."/>
            <person name="Richardson P."/>
            <person name="Belieav A."/>
            <person name="Sanford R.A."/>
            <person name="Loeffler F.E."/>
            <person name="Fields M.W."/>
        </authorList>
    </citation>
    <scope>NUCLEOTIDE SEQUENCE [LARGE SCALE GENOMIC DNA]</scope>
    <source>
        <strain>Fw109-5</strain>
    </source>
</reference>
<proteinExistence type="inferred from homology"/>